<dbReference type="EMBL" id="AE016796">
    <property type="protein sequence ID" value="AAO08229.1"/>
    <property type="molecule type" value="Genomic_DNA"/>
</dbReference>
<dbReference type="RefSeq" id="WP_011082225.1">
    <property type="nucleotide sequence ID" value="NC_004460.2"/>
</dbReference>
<dbReference type="SMR" id="Q8D4F9"/>
<dbReference type="KEGG" id="vvu:VV2_1342"/>
<dbReference type="HOGENOM" id="CLU_000445_125_3_6"/>
<dbReference type="UniPathway" id="UPA00638"/>
<dbReference type="Proteomes" id="UP000002275">
    <property type="component" value="Chromosome 2"/>
</dbReference>
<dbReference type="GO" id="GO:0005524">
    <property type="term" value="F:ATP binding"/>
    <property type="evidence" value="ECO:0007669"/>
    <property type="project" value="UniProtKB-UniRule"/>
</dbReference>
<dbReference type="GO" id="GO:0016887">
    <property type="term" value="F:ATP hydrolysis activity"/>
    <property type="evidence" value="ECO:0007669"/>
    <property type="project" value="InterPro"/>
</dbReference>
<dbReference type="GO" id="GO:0003677">
    <property type="term" value="F:DNA binding"/>
    <property type="evidence" value="ECO:0007669"/>
    <property type="project" value="UniProtKB-KW"/>
</dbReference>
<dbReference type="GO" id="GO:0003700">
    <property type="term" value="F:DNA-binding transcription factor activity"/>
    <property type="evidence" value="ECO:0007669"/>
    <property type="project" value="UniProtKB-UniRule"/>
</dbReference>
<dbReference type="GO" id="GO:0000160">
    <property type="term" value="P:phosphorelay signal transduction system"/>
    <property type="evidence" value="ECO:0007669"/>
    <property type="project" value="UniProtKB-UniRule"/>
</dbReference>
<dbReference type="CDD" id="cd00009">
    <property type="entry name" value="AAA"/>
    <property type="match status" value="1"/>
</dbReference>
<dbReference type="FunFam" id="3.40.50.300:FF:000006">
    <property type="entry name" value="DNA-binding transcriptional regulator NtrC"/>
    <property type="match status" value="1"/>
</dbReference>
<dbReference type="Gene3D" id="1.10.8.60">
    <property type="match status" value="1"/>
</dbReference>
<dbReference type="Gene3D" id="3.30.450.40">
    <property type="match status" value="1"/>
</dbReference>
<dbReference type="Gene3D" id="1.10.10.60">
    <property type="entry name" value="Homeodomain-like"/>
    <property type="match status" value="1"/>
</dbReference>
<dbReference type="Gene3D" id="3.40.50.300">
    <property type="entry name" value="P-loop containing nucleotide triphosphate hydrolases"/>
    <property type="match status" value="1"/>
</dbReference>
<dbReference type="HAMAP" id="MF_01314">
    <property type="entry name" value="NorR"/>
    <property type="match status" value="1"/>
</dbReference>
<dbReference type="InterPro" id="IPR003593">
    <property type="entry name" value="AAA+_ATPase"/>
</dbReference>
<dbReference type="InterPro" id="IPR003018">
    <property type="entry name" value="GAF"/>
</dbReference>
<dbReference type="InterPro" id="IPR029016">
    <property type="entry name" value="GAF-like_dom_sf"/>
</dbReference>
<dbReference type="InterPro" id="IPR009057">
    <property type="entry name" value="Homeodomain-like_sf"/>
</dbReference>
<dbReference type="InterPro" id="IPR023944">
    <property type="entry name" value="NorR"/>
</dbReference>
<dbReference type="InterPro" id="IPR027417">
    <property type="entry name" value="P-loop_NTPase"/>
</dbReference>
<dbReference type="InterPro" id="IPR002078">
    <property type="entry name" value="Sigma_54_int"/>
</dbReference>
<dbReference type="InterPro" id="IPR025662">
    <property type="entry name" value="Sigma_54_int_dom_ATP-bd_1"/>
</dbReference>
<dbReference type="InterPro" id="IPR025943">
    <property type="entry name" value="Sigma_54_int_dom_ATP-bd_2"/>
</dbReference>
<dbReference type="InterPro" id="IPR025944">
    <property type="entry name" value="Sigma_54_int_dom_CS"/>
</dbReference>
<dbReference type="NCBIfam" id="NF003451">
    <property type="entry name" value="PRK05022.1"/>
    <property type="match status" value="1"/>
</dbReference>
<dbReference type="PANTHER" id="PTHR32071:SF35">
    <property type="entry name" value="ANAEROBIC NITRIC OXIDE REDUCTASE TRANSCRIPTION REGULATOR NORR"/>
    <property type="match status" value="1"/>
</dbReference>
<dbReference type="PANTHER" id="PTHR32071">
    <property type="entry name" value="TRANSCRIPTIONAL REGULATORY PROTEIN"/>
    <property type="match status" value="1"/>
</dbReference>
<dbReference type="Pfam" id="PF01590">
    <property type="entry name" value="GAF"/>
    <property type="match status" value="1"/>
</dbReference>
<dbReference type="Pfam" id="PF00158">
    <property type="entry name" value="Sigma54_activat"/>
    <property type="match status" value="1"/>
</dbReference>
<dbReference type="SMART" id="SM00382">
    <property type="entry name" value="AAA"/>
    <property type="match status" value="1"/>
</dbReference>
<dbReference type="SMART" id="SM00065">
    <property type="entry name" value="GAF"/>
    <property type="match status" value="1"/>
</dbReference>
<dbReference type="SUPFAM" id="SSF55781">
    <property type="entry name" value="GAF domain-like"/>
    <property type="match status" value="1"/>
</dbReference>
<dbReference type="SUPFAM" id="SSF46689">
    <property type="entry name" value="Homeodomain-like"/>
    <property type="match status" value="1"/>
</dbReference>
<dbReference type="SUPFAM" id="SSF52540">
    <property type="entry name" value="P-loop containing nucleoside triphosphate hydrolases"/>
    <property type="match status" value="1"/>
</dbReference>
<dbReference type="PROSITE" id="PS00675">
    <property type="entry name" value="SIGMA54_INTERACT_1"/>
    <property type="match status" value="1"/>
</dbReference>
<dbReference type="PROSITE" id="PS00676">
    <property type="entry name" value="SIGMA54_INTERACT_2"/>
    <property type="match status" value="1"/>
</dbReference>
<dbReference type="PROSITE" id="PS00688">
    <property type="entry name" value="SIGMA54_INTERACT_3"/>
    <property type="match status" value="1"/>
</dbReference>
<dbReference type="PROSITE" id="PS50045">
    <property type="entry name" value="SIGMA54_INTERACT_4"/>
    <property type="match status" value="1"/>
</dbReference>
<keyword id="KW-0067">ATP-binding</keyword>
<keyword id="KW-0238">DNA-binding</keyword>
<keyword id="KW-0547">Nucleotide-binding</keyword>
<keyword id="KW-0804">Transcription</keyword>
<keyword id="KW-0805">Transcription regulation</keyword>
<sequence>MTSLIAQWLHITQDLNSALTRQARFDTLLTTIRDVLNCDSSALLLFEDQHFKPLAINGLAKEVLGRRFSIEQHPRLEAIARAGDIVRFPSESTLPDPYDGLITNHQGKLHVHSCIGLPLLIDDQLIGAITIDALDPNQFDQLKNQELRFISALAAGGLHTALLLEQLETQASLPRESYAEKRTLSNEIIGNSQGMRTLQDQIDAVANTELSVLVMGETGVGKELVANAIHHRSDRASNNLVYLNCAALPESVAESELFGHIKGAFTGAISHRKGKFEQADGGTLFLDEVGELSLELQAKLLRALQYGDIQRVGDDRHIRVNTRIVAATNRVLHEEVKAGRFRADLYHRLSVFPLHVPPLREREEDVILLAGFFAEQVRGKLGLHSVRLSPSLVAELREYHWPGNVRELEHVIKRAAVLAKARTPQMDIELISQDFDIKTPTSPMMPTVAASQAQHEIHSDIGLKQATDAFQKKLILRALESNQGNWAATARQLELDSGNLHRLAKRLGIK</sequence>
<comment type="function">
    <text evidence="1">Required for the expression of anaerobic nitric oxide (NO) reductase, acts as a transcriptional activator for at least the norVW operon. Activation also requires sigma-54.</text>
</comment>
<comment type="pathway">
    <text evidence="1">Nitrogen metabolism; nitric oxide reduction.</text>
</comment>
<feature type="chain" id="PRO_0000081159" description="Anaerobic nitric oxide reductase transcription regulator NorR">
    <location>
        <begin position="1"/>
        <end position="510"/>
    </location>
</feature>
<feature type="domain" description="Sigma-54 factor interaction" evidence="1">
    <location>
        <begin position="188"/>
        <end position="417"/>
    </location>
</feature>
<feature type="DNA-binding region" description="H-T-H motif" evidence="1">
    <location>
        <begin position="486"/>
        <end position="505"/>
    </location>
</feature>
<feature type="binding site" evidence="1">
    <location>
        <begin position="216"/>
        <end position="223"/>
    </location>
    <ligand>
        <name>ATP</name>
        <dbReference type="ChEBI" id="CHEBI:30616"/>
    </ligand>
</feature>
<feature type="binding site" evidence="1">
    <location>
        <begin position="279"/>
        <end position="288"/>
    </location>
    <ligand>
        <name>ATP</name>
        <dbReference type="ChEBI" id="CHEBI:30616"/>
    </ligand>
</feature>
<evidence type="ECO:0000255" key="1">
    <source>
        <dbReference type="HAMAP-Rule" id="MF_01314"/>
    </source>
</evidence>
<reference key="1">
    <citation type="submission" date="2002-12" db="EMBL/GenBank/DDBJ databases">
        <title>Complete genome sequence of Vibrio vulnificus CMCP6.</title>
        <authorList>
            <person name="Rhee J.H."/>
            <person name="Kim S.Y."/>
            <person name="Chung S.S."/>
            <person name="Kim J.J."/>
            <person name="Moon Y.H."/>
            <person name="Jeong H."/>
            <person name="Choy H.E."/>
        </authorList>
    </citation>
    <scope>NUCLEOTIDE SEQUENCE [LARGE SCALE GENOMIC DNA]</scope>
    <source>
        <strain>CMCP6</strain>
    </source>
</reference>
<gene>
    <name evidence="1" type="primary">norR</name>
    <name type="ordered locus">VV2_1342</name>
</gene>
<accession>Q8D4F9</accession>
<protein>
    <recommendedName>
        <fullName evidence="1">Anaerobic nitric oxide reductase transcription regulator NorR</fullName>
    </recommendedName>
</protein>
<proteinExistence type="inferred from homology"/>
<organism>
    <name type="scientific">Vibrio vulnificus (strain CMCP6)</name>
    <dbReference type="NCBI Taxonomy" id="216895"/>
    <lineage>
        <taxon>Bacteria</taxon>
        <taxon>Pseudomonadati</taxon>
        <taxon>Pseudomonadota</taxon>
        <taxon>Gammaproteobacteria</taxon>
        <taxon>Vibrionales</taxon>
        <taxon>Vibrionaceae</taxon>
        <taxon>Vibrio</taxon>
    </lineage>
</organism>
<name>NORR_VIBVU</name>